<organism>
    <name type="scientific">Arabidopsis thaliana</name>
    <name type="common">Mouse-ear cress</name>
    <dbReference type="NCBI Taxonomy" id="3702"/>
    <lineage>
        <taxon>Eukaryota</taxon>
        <taxon>Viridiplantae</taxon>
        <taxon>Streptophyta</taxon>
        <taxon>Embryophyta</taxon>
        <taxon>Tracheophyta</taxon>
        <taxon>Spermatophyta</taxon>
        <taxon>Magnoliopsida</taxon>
        <taxon>eudicotyledons</taxon>
        <taxon>Gunneridae</taxon>
        <taxon>Pentapetalae</taxon>
        <taxon>rosids</taxon>
        <taxon>malvids</taxon>
        <taxon>Brassicales</taxon>
        <taxon>Brassicaceae</taxon>
        <taxon>Camelineae</taxon>
        <taxon>Arabidopsis</taxon>
    </lineage>
</organism>
<protein>
    <recommendedName>
        <fullName>Ubiquitin-conjugating enzyme E2 36</fullName>
        <ecNumber>2.3.2.23</ecNumber>
    </recommendedName>
    <alternativeName>
        <fullName>E2 ubiquitin-conjugating enzyme 36</fullName>
    </alternativeName>
    <alternativeName>
        <fullName>Ubiquitin carrier protein 36</fullName>
    </alternativeName>
</protein>
<keyword id="KW-0025">Alternative splicing</keyword>
<keyword id="KW-0067">ATP-binding</keyword>
<keyword id="KW-0547">Nucleotide-binding</keyword>
<keyword id="KW-1185">Reference proteome</keyword>
<keyword id="KW-0808">Transferase</keyword>
<keyword id="KW-0833">Ubl conjugation pathway</keyword>
<feature type="chain" id="PRO_0000345201" description="Ubiquitin-conjugating enzyme E2 36">
    <location>
        <begin position="1"/>
        <end position="153"/>
    </location>
</feature>
<feature type="domain" description="UBC core" evidence="1">
    <location>
        <begin position="5"/>
        <end position="151"/>
    </location>
</feature>
<feature type="active site" description="Glycyl thioester intermediate" evidence="1 2">
    <location>
        <position position="89"/>
    </location>
</feature>
<feature type="splice variant" id="VSP_034932" description="In isoform 2." evidence="8">
    <location>
        <begin position="1"/>
        <end position="33"/>
    </location>
</feature>
<dbReference type="EC" id="2.3.2.23"/>
<dbReference type="EMBL" id="DQ027049">
    <property type="protein sequence ID" value="AAY44875.1"/>
    <property type="molecule type" value="mRNA"/>
</dbReference>
<dbReference type="EMBL" id="AC051629">
    <property type="protein sequence ID" value="AAF99844.1"/>
    <property type="molecule type" value="Genomic_DNA"/>
</dbReference>
<dbReference type="EMBL" id="CP002684">
    <property type="protein sequence ID" value="AEE29515.1"/>
    <property type="molecule type" value="Genomic_DNA"/>
</dbReference>
<dbReference type="EMBL" id="CP002684">
    <property type="protein sequence ID" value="AEE29516.1"/>
    <property type="molecule type" value="Genomic_DNA"/>
</dbReference>
<dbReference type="EMBL" id="AY052307">
    <property type="protein sequence ID" value="AAK96500.1"/>
    <property type="molecule type" value="mRNA"/>
</dbReference>
<dbReference type="EMBL" id="AY061926">
    <property type="protein sequence ID" value="AAL31253.1"/>
    <property type="molecule type" value="mRNA"/>
</dbReference>
<dbReference type="EMBL" id="AY086780">
    <property type="protein sequence ID" value="AAM63831.1"/>
    <property type="molecule type" value="mRNA"/>
</dbReference>
<dbReference type="PIR" id="C86304">
    <property type="entry name" value="C86304"/>
</dbReference>
<dbReference type="RefSeq" id="NP_564011.1">
    <molecule id="Q9FZ48-1"/>
    <property type="nucleotide sequence ID" value="NM_101550.4"/>
</dbReference>
<dbReference type="RefSeq" id="NP_849678.1">
    <molecule id="Q9FZ48-2"/>
    <property type="nucleotide sequence ID" value="NM_179347.2"/>
</dbReference>
<dbReference type="SMR" id="Q9FZ48"/>
<dbReference type="BioGRID" id="23500">
    <property type="interactions" value="11"/>
</dbReference>
<dbReference type="FunCoup" id="Q9FZ48">
    <property type="interactions" value="4573"/>
</dbReference>
<dbReference type="IntAct" id="Q9FZ48">
    <property type="interactions" value="9"/>
</dbReference>
<dbReference type="STRING" id="3702.Q9FZ48"/>
<dbReference type="GlyGen" id="Q9FZ48">
    <property type="glycosylation" value="1 site"/>
</dbReference>
<dbReference type="iPTMnet" id="Q9FZ48"/>
<dbReference type="MetOSite" id="Q9FZ48"/>
<dbReference type="ProteomicsDB" id="228598">
    <molecule id="Q9FZ48-1"/>
</dbReference>
<dbReference type="EnsemblPlants" id="AT1G16890.1">
    <molecule id="Q9FZ48-2"/>
    <property type="protein sequence ID" value="AT1G16890.1"/>
    <property type="gene ID" value="AT1G16890"/>
</dbReference>
<dbReference type="EnsemblPlants" id="AT1G16890.2">
    <molecule id="Q9FZ48-1"/>
    <property type="protein sequence ID" value="AT1G16890.2"/>
    <property type="gene ID" value="AT1G16890"/>
</dbReference>
<dbReference type="GeneID" id="838260"/>
<dbReference type="Gramene" id="AT1G16890.1">
    <molecule id="Q9FZ48-2"/>
    <property type="protein sequence ID" value="AT1G16890.1"/>
    <property type="gene ID" value="AT1G16890"/>
</dbReference>
<dbReference type="Gramene" id="AT1G16890.2">
    <molecule id="Q9FZ48-1"/>
    <property type="protein sequence ID" value="AT1G16890.2"/>
    <property type="gene ID" value="AT1G16890"/>
</dbReference>
<dbReference type="KEGG" id="ath:AT1G16890"/>
<dbReference type="Araport" id="AT1G16890"/>
<dbReference type="TAIR" id="AT1G16890">
    <property type="gene designation" value="UBC36"/>
</dbReference>
<dbReference type="HOGENOM" id="CLU_030988_13_2_1"/>
<dbReference type="InParanoid" id="Q9FZ48"/>
<dbReference type="OMA" id="AEPHEDN"/>
<dbReference type="OrthoDB" id="1027250at2759"/>
<dbReference type="PhylomeDB" id="Q9FZ48"/>
<dbReference type="UniPathway" id="UPA00143"/>
<dbReference type="CD-CODE" id="4299E36E">
    <property type="entry name" value="Nucleolus"/>
</dbReference>
<dbReference type="PRO" id="PR:Q9FZ48"/>
<dbReference type="Proteomes" id="UP000006548">
    <property type="component" value="Chromosome 1"/>
</dbReference>
<dbReference type="ExpressionAtlas" id="Q9FZ48">
    <property type="expression patterns" value="baseline and differential"/>
</dbReference>
<dbReference type="GO" id="GO:0005524">
    <property type="term" value="F:ATP binding"/>
    <property type="evidence" value="ECO:0007669"/>
    <property type="project" value="UniProtKB-KW"/>
</dbReference>
<dbReference type="GO" id="GO:0061631">
    <property type="term" value="F:ubiquitin conjugating enzyme activity"/>
    <property type="evidence" value="ECO:0007669"/>
    <property type="project" value="UniProtKB-EC"/>
</dbReference>
<dbReference type="GO" id="GO:0016567">
    <property type="term" value="P:protein ubiquitination"/>
    <property type="evidence" value="ECO:0007669"/>
    <property type="project" value="UniProtKB-UniPathway"/>
</dbReference>
<dbReference type="CDD" id="cd23813">
    <property type="entry name" value="UBCc_UBE2N"/>
    <property type="match status" value="1"/>
</dbReference>
<dbReference type="FunFam" id="3.10.110.10:FF:000143">
    <property type="entry name" value="Ubiquitin-conjugating enzyme E2 36"/>
    <property type="match status" value="1"/>
</dbReference>
<dbReference type="Gene3D" id="3.10.110.10">
    <property type="entry name" value="Ubiquitin Conjugating Enzyme"/>
    <property type="match status" value="1"/>
</dbReference>
<dbReference type="InterPro" id="IPR000608">
    <property type="entry name" value="UBQ-conjugat_E2_core"/>
</dbReference>
<dbReference type="InterPro" id="IPR023313">
    <property type="entry name" value="UBQ-conjugating_AS"/>
</dbReference>
<dbReference type="InterPro" id="IPR016135">
    <property type="entry name" value="UBQ-conjugating_enzyme/RWD"/>
</dbReference>
<dbReference type="PANTHER" id="PTHR24068">
    <property type="entry name" value="UBIQUITIN-CONJUGATING ENZYME E2"/>
    <property type="match status" value="1"/>
</dbReference>
<dbReference type="Pfam" id="PF00179">
    <property type="entry name" value="UQ_con"/>
    <property type="match status" value="1"/>
</dbReference>
<dbReference type="SMART" id="SM00212">
    <property type="entry name" value="UBCc"/>
    <property type="match status" value="1"/>
</dbReference>
<dbReference type="SUPFAM" id="SSF54495">
    <property type="entry name" value="UBC-like"/>
    <property type="match status" value="1"/>
</dbReference>
<dbReference type="PROSITE" id="PS00183">
    <property type="entry name" value="UBC_1"/>
    <property type="match status" value="1"/>
</dbReference>
<dbReference type="PROSITE" id="PS50127">
    <property type="entry name" value="UBC_2"/>
    <property type="match status" value="1"/>
</dbReference>
<gene>
    <name type="primary">UBC36</name>
    <name type="synonym">UBC13B</name>
    <name type="synonym">UBG13B</name>
    <name type="ordered locus">At1g16890</name>
    <name type="ORF">F17F16.19</name>
    <name type="ORF">F6I1.11</name>
</gene>
<sequence length="153" mass="17220">MANSNLPRRIIKETQRLLSEPAPGISASPSEENMRYFNVMILGPTQSPYEGGVFKLELFLPEEYPMAAPKVRFLTKIYHPNIDKLGRICLDILKDKWSPALQIRTVLLSIQALLSAPNPDDPLSENIAKHWKSNEAEAVETAKEWTRLYASGA</sequence>
<accession>Q9FZ48</accession>
<accession>Q3EDA7</accession>
<proteinExistence type="evidence at protein level"/>
<comment type="function">
    <text evidence="3 4 7">Catalyzes the synthesis of non-canonical poly-ubiquitin chains that are linked through 'Lys-63'. This type of poly-ubiquitination does not lead to protein degradation by the proteasome. Mediates transcriptional activation of target genes. Required for postreplication repair of UV-damaged DNA and for adapting root developmental programs to suboptimal availability of iron.</text>
</comment>
<comment type="catalytic activity">
    <reaction evidence="1 2">
        <text>S-ubiquitinyl-[E1 ubiquitin-activating enzyme]-L-cysteine + [E2 ubiquitin-conjugating enzyme]-L-cysteine = [E1 ubiquitin-activating enzyme]-L-cysteine + S-ubiquitinyl-[E2 ubiquitin-conjugating enzyme]-L-cysteine.</text>
        <dbReference type="EC" id="2.3.2.23"/>
    </reaction>
</comment>
<comment type="pathway">
    <text evidence="1">Protein modification; protein ubiquitination.</text>
</comment>
<comment type="subunit">
    <text evidence="4 5 6">Interacts with yeast and human Mms2, with the RING domain of RGLG2 and with UEV1A, UEV1B, UEV1C and UEV1D.</text>
</comment>
<comment type="alternative products">
    <event type="alternative splicing"/>
    <isoform>
        <id>Q9FZ48-1</id>
        <name>1</name>
        <sequence type="displayed"/>
    </isoform>
    <isoform>
        <id>Q9FZ48-2</id>
        <name>2</name>
        <sequence type="described" ref="VSP_034932"/>
    </isoform>
</comment>
<comment type="tissue specificity">
    <text evidence="4">Ubiquitously expressed at low level.</text>
</comment>
<comment type="induction">
    <text evidence="4 7">Not induced by iron.</text>
</comment>
<comment type="miscellaneous">
    <text>Partly functionally redundant with UBC35.</text>
</comment>
<comment type="miscellaneous">
    <molecule>Isoform 2</molecule>
    <text evidence="8">May be due to an intron retention.</text>
</comment>
<comment type="similarity">
    <text evidence="1">Belongs to the ubiquitin-conjugating enzyme family.</text>
</comment>
<evidence type="ECO:0000255" key="1">
    <source>
        <dbReference type="PROSITE-ProRule" id="PRU00388"/>
    </source>
</evidence>
<evidence type="ECO:0000255" key="2">
    <source>
        <dbReference type="PROSITE-ProRule" id="PRU10133"/>
    </source>
</evidence>
<evidence type="ECO:0000269" key="3">
    <source>
    </source>
</evidence>
<evidence type="ECO:0000269" key="4">
    <source>
    </source>
</evidence>
<evidence type="ECO:0000269" key="5">
    <source>
    </source>
</evidence>
<evidence type="ECO:0000269" key="6">
    <source>
    </source>
</evidence>
<evidence type="ECO:0000269" key="7">
    <source>
    </source>
</evidence>
<evidence type="ECO:0000305" key="8"/>
<reference key="1">
    <citation type="journal article" date="2005" name="Plant Physiol.">
        <title>Genome analysis and functional characterization of the E2 and RING-type E3 ligase ubiquitination enzymes of Arabidopsis.</title>
        <authorList>
            <person name="Kraft E."/>
            <person name="Stone S.L."/>
            <person name="Ma L."/>
            <person name="Su N."/>
            <person name="Gao Y."/>
            <person name="Lau O.-S."/>
            <person name="Deng X.-W."/>
            <person name="Callis J."/>
        </authorList>
    </citation>
    <scope>NUCLEOTIDE SEQUENCE [MRNA] (ISOFORM 1)</scope>
    <scope>FUNCTION</scope>
    <scope>GENE FAMILY</scope>
    <scope>NOMENCLATURE</scope>
</reference>
<reference key="2">
    <citation type="journal article" date="2000" name="Nature">
        <title>Sequence and analysis of chromosome 1 of the plant Arabidopsis thaliana.</title>
        <authorList>
            <person name="Theologis A."/>
            <person name="Ecker J.R."/>
            <person name="Palm C.J."/>
            <person name="Federspiel N.A."/>
            <person name="Kaul S."/>
            <person name="White O."/>
            <person name="Alonso J."/>
            <person name="Altafi H."/>
            <person name="Araujo R."/>
            <person name="Bowman C.L."/>
            <person name="Brooks S.Y."/>
            <person name="Buehler E."/>
            <person name="Chan A."/>
            <person name="Chao Q."/>
            <person name="Chen H."/>
            <person name="Cheuk R.F."/>
            <person name="Chin C.W."/>
            <person name="Chung M.K."/>
            <person name="Conn L."/>
            <person name="Conway A.B."/>
            <person name="Conway A.R."/>
            <person name="Creasy T.H."/>
            <person name="Dewar K."/>
            <person name="Dunn P."/>
            <person name="Etgu P."/>
            <person name="Feldblyum T.V."/>
            <person name="Feng J.-D."/>
            <person name="Fong B."/>
            <person name="Fujii C.Y."/>
            <person name="Gill J.E."/>
            <person name="Goldsmith A.D."/>
            <person name="Haas B."/>
            <person name="Hansen N.F."/>
            <person name="Hughes B."/>
            <person name="Huizar L."/>
            <person name="Hunter J.L."/>
            <person name="Jenkins J."/>
            <person name="Johnson-Hopson C."/>
            <person name="Khan S."/>
            <person name="Khaykin E."/>
            <person name="Kim C.J."/>
            <person name="Koo H.L."/>
            <person name="Kremenetskaia I."/>
            <person name="Kurtz D.B."/>
            <person name="Kwan A."/>
            <person name="Lam B."/>
            <person name="Langin-Hooper S."/>
            <person name="Lee A."/>
            <person name="Lee J.M."/>
            <person name="Lenz C.A."/>
            <person name="Li J.H."/>
            <person name="Li Y.-P."/>
            <person name="Lin X."/>
            <person name="Liu S.X."/>
            <person name="Liu Z.A."/>
            <person name="Luros J.S."/>
            <person name="Maiti R."/>
            <person name="Marziali A."/>
            <person name="Militscher J."/>
            <person name="Miranda M."/>
            <person name="Nguyen M."/>
            <person name="Nierman W.C."/>
            <person name="Osborne B.I."/>
            <person name="Pai G."/>
            <person name="Peterson J."/>
            <person name="Pham P.K."/>
            <person name="Rizzo M."/>
            <person name="Rooney T."/>
            <person name="Rowley D."/>
            <person name="Sakano H."/>
            <person name="Salzberg S.L."/>
            <person name="Schwartz J.R."/>
            <person name="Shinn P."/>
            <person name="Southwick A.M."/>
            <person name="Sun H."/>
            <person name="Tallon L.J."/>
            <person name="Tambunga G."/>
            <person name="Toriumi M.J."/>
            <person name="Town C.D."/>
            <person name="Utterback T."/>
            <person name="Van Aken S."/>
            <person name="Vaysberg M."/>
            <person name="Vysotskaia V.S."/>
            <person name="Walker M."/>
            <person name="Wu D."/>
            <person name="Yu G."/>
            <person name="Fraser C.M."/>
            <person name="Venter J.C."/>
            <person name="Davis R.W."/>
        </authorList>
    </citation>
    <scope>NUCLEOTIDE SEQUENCE [LARGE SCALE GENOMIC DNA]</scope>
    <source>
        <strain>cv. Columbia</strain>
    </source>
</reference>
<reference key="3">
    <citation type="journal article" date="2017" name="Plant J.">
        <title>Araport11: a complete reannotation of the Arabidopsis thaliana reference genome.</title>
        <authorList>
            <person name="Cheng C.Y."/>
            <person name="Krishnakumar V."/>
            <person name="Chan A.P."/>
            <person name="Thibaud-Nissen F."/>
            <person name="Schobel S."/>
            <person name="Town C.D."/>
        </authorList>
    </citation>
    <scope>GENOME REANNOTATION</scope>
    <source>
        <strain>cv. Columbia</strain>
    </source>
</reference>
<reference key="4">
    <citation type="journal article" date="2003" name="Science">
        <title>Empirical analysis of transcriptional activity in the Arabidopsis genome.</title>
        <authorList>
            <person name="Yamada K."/>
            <person name="Lim J."/>
            <person name="Dale J.M."/>
            <person name="Chen H."/>
            <person name="Shinn P."/>
            <person name="Palm C.J."/>
            <person name="Southwick A.M."/>
            <person name="Wu H.C."/>
            <person name="Kim C.J."/>
            <person name="Nguyen M."/>
            <person name="Pham P.K."/>
            <person name="Cheuk R.F."/>
            <person name="Karlin-Newmann G."/>
            <person name="Liu S.X."/>
            <person name="Lam B."/>
            <person name="Sakano H."/>
            <person name="Wu T."/>
            <person name="Yu G."/>
            <person name="Miranda M."/>
            <person name="Quach H.L."/>
            <person name="Tripp M."/>
            <person name="Chang C.H."/>
            <person name="Lee J.M."/>
            <person name="Toriumi M.J."/>
            <person name="Chan M.M."/>
            <person name="Tang C.C."/>
            <person name="Onodera C.S."/>
            <person name="Deng J.M."/>
            <person name="Akiyama K."/>
            <person name="Ansari Y."/>
            <person name="Arakawa T."/>
            <person name="Banh J."/>
            <person name="Banno F."/>
            <person name="Bowser L."/>
            <person name="Brooks S.Y."/>
            <person name="Carninci P."/>
            <person name="Chao Q."/>
            <person name="Choy N."/>
            <person name="Enju A."/>
            <person name="Goldsmith A.D."/>
            <person name="Gurjal M."/>
            <person name="Hansen N.F."/>
            <person name="Hayashizaki Y."/>
            <person name="Johnson-Hopson C."/>
            <person name="Hsuan V.W."/>
            <person name="Iida K."/>
            <person name="Karnes M."/>
            <person name="Khan S."/>
            <person name="Koesema E."/>
            <person name="Ishida J."/>
            <person name="Jiang P.X."/>
            <person name="Jones T."/>
            <person name="Kawai J."/>
            <person name="Kamiya A."/>
            <person name="Meyers C."/>
            <person name="Nakajima M."/>
            <person name="Narusaka M."/>
            <person name="Seki M."/>
            <person name="Sakurai T."/>
            <person name="Satou M."/>
            <person name="Tamse R."/>
            <person name="Vaysberg M."/>
            <person name="Wallender E.K."/>
            <person name="Wong C."/>
            <person name="Yamamura Y."/>
            <person name="Yuan S."/>
            <person name="Shinozaki K."/>
            <person name="Davis R.W."/>
            <person name="Theologis A."/>
            <person name="Ecker J.R."/>
        </authorList>
    </citation>
    <scope>NUCLEOTIDE SEQUENCE [LARGE SCALE MRNA] (ISOFORM 1)</scope>
    <source>
        <strain>cv. Columbia</strain>
    </source>
</reference>
<reference key="5">
    <citation type="submission" date="2002-03" db="EMBL/GenBank/DDBJ databases">
        <title>Full-length cDNA from Arabidopsis thaliana.</title>
        <authorList>
            <person name="Brover V.V."/>
            <person name="Troukhan M.E."/>
            <person name="Alexandrov N.A."/>
            <person name="Lu Y.-P."/>
            <person name="Flavell R.B."/>
            <person name="Feldmann K.A."/>
        </authorList>
    </citation>
    <scope>NUCLEOTIDE SEQUENCE [LARGE SCALE MRNA] (ISOFORM 1)</scope>
</reference>
<reference key="6">
    <citation type="journal article" date="2006" name="Plant Mol. Biol.">
        <title>Arabidopsis thaliana UBC13: implication of error-free DNA damage tolerance and Lys63-linked polyubiquitylation in plants.</title>
        <authorList>
            <person name="Wen R."/>
            <person name="Newton L."/>
            <person name="Li G."/>
            <person name="Wang H."/>
            <person name="Xiao W."/>
        </authorList>
    </citation>
    <scope>FUNCTION</scope>
    <scope>INTERACTION WITH YEAST AND HUMAN MMS2</scope>
    <scope>TISSUE SPECIFICITY</scope>
    <scope>INDUCTION</scope>
</reference>
<reference key="7">
    <citation type="journal article" date="2007" name="Plant Cell">
        <title>Ubiquitin lysine 63 chain forming ligases regulate apical dominance in Arabidopsis.</title>
        <authorList>
            <person name="Yin X.-J."/>
            <person name="Volk S."/>
            <person name="Ljung K."/>
            <person name="Mehlmer N."/>
            <person name="Dolezal K."/>
            <person name="Ditengou F."/>
            <person name="Hanano S."/>
            <person name="Davis S.J."/>
            <person name="Schmelzer E."/>
            <person name="Sandberg G."/>
            <person name="Teige M."/>
            <person name="Palme K."/>
            <person name="Pickart C."/>
            <person name="Bachmair A."/>
        </authorList>
    </citation>
    <scope>INTERACTION WITH RGLG2</scope>
</reference>
<reference key="8">
    <citation type="journal article" date="2008" name="Plant Cell">
        <title>Arabidopsis UEV1D promotes lysine-63-linked polyubiquitination and is involved in DNA damage response.</title>
        <authorList>
            <person name="Wen R."/>
            <person name="Torres-Acosta J.A."/>
            <person name="Pastushok L."/>
            <person name="Lai X."/>
            <person name="Pelzer L."/>
            <person name="Wang H."/>
            <person name="Xiao W."/>
        </authorList>
    </citation>
    <scope>INTERACTION WITH UEV1A; UEV1B; UEV1C AND UEV1D</scope>
</reference>
<reference key="9">
    <citation type="journal article" date="2010" name="Plant J.">
        <title>A lysine-63-linked ubiquitin chain-forming conjugase, UBC13, promotes the developmental responses to iron deficiency in Arabidopsis roots.</title>
        <authorList>
            <person name="Li W."/>
            <person name="Schmidt W."/>
        </authorList>
    </citation>
    <scope>FUNCTION</scope>
    <scope>INDUCTION BY IRON</scope>
</reference>
<name>UBC36_ARATH</name>